<dbReference type="EC" id="7.-.-.-" evidence="1"/>
<dbReference type="EMBL" id="AE017355">
    <property type="protein sequence ID" value="AAT61433.1"/>
    <property type="status" value="ALT_INIT"/>
    <property type="molecule type" value="Genomic_DNA"/>
</dbReference>
<dbReference type="RefSeq" id="WP_000711776.1">
    <property type="nucleotide sequence ID" value="NC_005957.1"/>
</dbReference>
<dbReference type="RefSeq" id="YP_034490.1">
    <property type="nucleotide sequence ID" value="NC_005957.1"/>
</dbReference>
<dbReference type="SMR" id="Q6HPN0"/>
<dbReference type="KEGG" id="btk:BT9727_0134"/>
<dbReference type="PATRIC" id="fig|281309.8.peg.136"/>
<dbReference type="HOGENOM" id="CLU_000604_1_22_9"/>
<dbReference type="Proteomes" id="UP000001301">
    <property type="component" value="Chromosome"/>
</dbReference>
<dbReference type="GO" id="GO:0043190">
    <property type="term" value="C:ATP-binding cassette (ABC) transporter complex"/>
    <property type="evidence" value="ECO:0007669"/>
    <property type="project" value="TreeGrafter"/>
</dbReference>
<dbReference type="GO" id="GO:0005524">
    <property type="term" value="F:ATP binding"/>
    <property type="evidence" value="ECO:0007669"/>
    <property type="project" value="UniProtKB-KW"/>
</dbReference>
<dbReference type="GO" id="GO:0016887">
    <property type="term" value="F:ATP hydrolysis activity"/>
    <property type="evidence" value="ECO:0007669"/>
    <property type="project" value="InterPro"/>
</dbReference>
<dbReference type="GO" id="GO:0042626">
    <property type="term" value="F:ATPase-coupled transmembrane transporter activity"/>
    <property type="evidence" value="ECO:0007669"/>
    <property type="project" value="TreeGrafter"/>
</dbReference>
<dbReference type="CDD" id="cd03225">
    <property type="entry name" value="ABC_cobalt_CbiO_domain1"/>
    <property type="match status" value="1"/>
</dbReference>
<dbReference type="FunFam" id="3.40.50.300:FF:000224">
    <property type="entry name" value="Energy-coupling factor transporter ATP-binding protein EcfA"/>
    <property type="match status" value="1"/>
</dbReference>
<dbReference type="Gene3D" id="3.40.50.300">
    <property type="entry name" value="P-loop containing nucleotide triphosphate hydrolases"/>
    <property type="match status" value="1"/>
</dbReference>
<dbReference type="InterPro" id="IPR003593">
    <property type="entry name" value="AAA+_ATPase"/>
</dbReference>
<dbReference type="InterPro" id="IPR003439">
    <property type="entry name" value="ABC_transporter-like_ATP-bd"/>
</dbReference>
<dbReference type="InterPro" id="IPR017871">
    <property type="entry name" value="ABC_transporter-like_CS"/>
</dbReference>
<dbReference type="InterPro" id="IPR015856">
    <property type="entry name" value="ABC_transpr_CbiO/EcfA_su"/>
</dbReference>
<dbReference type="InterPro" id="IPR050095">
    <property type="entry name" value="ECF_ABC_transporter_ATP-bd"/>
</dbReference>
<dbReference type="InterPro" id="IPR030947">
    <property type="entry name" value="EcfA_1"/>
</dbReference>
<dbReference type="InterPro" id="IPR027417">
    <property type="entry name" value="P-loop_NTPase"/>
</dbReference>
<dbReference type="NCBIfam" id="TIGR04520">
    <property type="entry name" value="ECF_ATPase_1"/>
    <property type="match status" value="1"/>
</dbReference>
<dbReference type="NCBIfam" id="NF010156">
    <property type="entry name" value="PRK13635.1"/>
    <property type="match status" value="1"/>
</dbReference>
<dbReference type="NCBIfam" id="NF010167">
    <property type="entry name" value="PRK13648.1"/>
    <property type="match status" value="1"/>
</dbReference>
<dbReference type="PANTHER" id="PTHR43553:SF24">
    <property type="entry name" value="ENERGY-COUPLING FACTOR TRANSPORTER ATP-BINDING PROTEIN ECFA1"/>
    <property type="match status" value="1"/>
</dbReference>
<dbReference type="PANTHER" id="PTHR43553">
    <property type="entry name" value="HEAVY METAL TRANSPORTER"/>
    <property type="match status" value="1"/>
</dbReference>
<dbReference type="Pfam" id="PF00005">
    <property type="entry name" value="ABC_tran"/>
    <property type="match status" value="1"/>
</dbReference>
<dbReference type="SMART" id="SM00382">
    <property type="entry name" value="AAA"/>
    <property type="match status" value="1"/>
</dbReference>
<dbReference type="SUPFAM" id="SSF52540">
    <property type="entry name" value="P-loop containing nucleoside triphosphate hydrolases"/>
    <property type="match status" value="1"/>
</dbReference>
<dbReference type="PROSITE" id="PS00211">
    <property type="entry name" value="ABC_TRANSPORTER_1"/>
    <property type="match status" value="1"/>
</dbReference>
<dbReference type="PROSITE" id="PS50893">
    <property type="entry name" value="ABC_TRANSPORTER_2"/>
    <property type="match status" value="1"/>
</dbReference>
<dbReference type="PROSITE" id="PS51246">
    <property type="entry name" value="CBIO"/>
    <property type="match status" value="1"/>
</dbReference>
<feature type="chain" id="PRO_0000091982" description="Energy-coupling factor transporter ATP-binding protein EcfA1">
    <location>
        <begin position="1"/>
        <end position="280"/>
    </location>
</feature>
<feature type="domain" description="ABC transporter" evidence="1">
    <location>
        <begin position="6"/>
        <end position="241"/>
    </location>
</feature>
<feature type="binding site" evidence="1">
    <location>
        <begin position="40"/>
        <end position="47"/>
    </location>
    <ligand>
        <name>ATP</name>
        <dbReference type="ChEBI" id="CHEBI:30616"/>
    </ligand>
</feature>
<gene>
    <name evidence="1" type="primary">ecfA1</name>
    <name type="synonym">cbiO1</name>
    <name type="ordered locus">BT9727_0134</name>
</gene>
<name>ECFA1_BACHK</name>
<keyword id="KW-0067">ATP-binding</keyword>
<keyword id="KW-1003">Cell membrane</keyword>
<keyword id="KW-0472">Membrane</keyword>
<keyword id="KW-0547">Nucleotide-binding</keyword>
<keyword id="KW-1278">Translocase</keyword>
<keyword id="KW-0813">Transport</keyword>
<evidence type="ECO:0000255" key="1">
    <source>
        <dbReference type="HAMAP-Rule" id="MF_01710"/>
    </source>
</evidence>
<evidence type="ECO:0000305" key="2"/>
<sequence>MKKEKLRTENISFQYPGAATYALKDVSFSLFEGEWVSVIGQNGSGKSTLAKLLNGLFLPEAGTITVNDTMILSEETVWDVRKQIGMVFQNPDNQFVGTTVQDDVVFGLENIGMPREQMVERLNQALRLVRMEDFLNDEPHSLSGGQKQRVAIAGVLALQPSILILDEATSMLDPQGRREVVETVRQLVNEKGITVLSITHDLEEAAQSDRVIILNKGEILEEGTPEQIFKSSHMLQEIGLDVPFSVKIAELLKRNEILLQNTHLTMESLVNELWRLHSKK</sequence>
<organism>
    <name type="scientific">Bacillus thuringiensis subsp. konkukian (strain 97-27)</name>
    <dbReference type="NCBI Taxonomy" id="281309"/>
    <lineage>
        <taxon>Bacteria</taxon>
        <taxon>Bacillati</taxon>
        <taxon>Bacillota</taxon>
        <taxon>Bacilli</taxon>
        <taxon>Bacillales</taxon>
        <taxon>Bacillaceae</taxon>
        <taxon>Bacillus</taxon>
        <taxon>Bacillus cereus group</taxon>
    </lineage>
</organism>
<proteinExistence type="inferred from homology"/>
<comment type="function">
    <text evidence="1">ATP-binding (A) component of a common energy-coupling factor (ECF) ABC-transporter complex. Unlike classic ABC transporters this ECF transporter provides the energy necessary to transport a number of different substrates.</text>
</comment>
<comment type="subunit">
    <text evidence="1">Forms a stable energy-coupling factor (ECF) transporter complex composed of 2 membrane-embedded substrate-binding proteins (S component), 2 ATP-binding proteins (A component) and 2 transmembrane proteins (T component).</text>
</comment>
<comment type="subcellular location">
    <subcellularLocation>
        <location evidence="1">Cell membrane</location>
        <topology evidence="1">Peripheral membrane protein</topology>
    </subcellularLocation>
</comment>
<comment type="similarity">
    <text evidence="1">Belongs to the ABC transporter superfamily. Energy-coupling factor EcfA family.</text>
</comment>
<comment type="sequence caution" evidence="2">
    <conflict type="erroneous initiation">
        <sequence resource="EMBL-CDS" id="AAT61433"/>
    </conflict>
    <text>Extended N-terminus.</text>
</comment>
<reference key="1">
    <citation type="journal article" date="2006" name="J. Bacteriol.">
        <title>Pathogenomic sequence analysis of Bacillus cereus and Bacillus thuringiensis isolates closely related to Bacillus anthracis.</title>
        <authorList>
            <person name="Han C.S."/>
            <person name="Xie G."/>
            <person name="Challacombe J.F."/>
            <person name="Altherr M.R."/>
            <person name="Bhotika S.S."/>
            <person name="Bruce D."/>
            <person name="Campbell C.S."/>
            <person name="Campbell M.L."/>
            <person name="Chen J."/>
            <person name="Chertkov O."/>
            <person name="Cleland C."/>
            <person name="Dimitrijevic M."/>
            <person name="Doggett N.A."/>
            <person name="Fawcett J.J."/>
            <person name="Glavina T."/>
            <person name="Goodwin L.A."/>
            <person name="Hill K.K."/>
            <person name="Hitchcock P."/>
            <person name="Jackson P.J."/>
            <person name="Keim P."/>
            <person name="Kewalramani A.R."/>
            <person name="Longmire J."/>
            <person name="Lucas S."/>
            <person name="Malfatti S."/>
            <person name="McMurry K."/>
            <person name="Meincke L.J."/>
            <person name="Misra M."/>
            <person name="Moseman B.L."/>
            <person name="Mundt M."/>
            <person name="Munk A.C."/>
            <person name="Okinaka R.T."/>
            <person name="Parson-Quintana B."/>
            <person name="Reilly L.P."/>
            <person name="Richardson P."/>
            <person name="Robinson D.L."/>
            <person name="Rubin E."/>
            <person name="Saunders E."/>
            <person name="Tapia R."/>
            <person name="Tesmer J.G."/>
            <person name="Thayer N."/>
            <person name="Thompson L.S."/>
            <person name="Tice H."/>
            <person name="Ticknor L.O."/>
            <person name="Wills P.L."/>
            <person name="Brettin T.S."/>
            <person name="Gilna P."/>
        </authorList>
    </citation>
    <scope>NUCLEOTIDE SEQUENCE [LARGE SCALE GENOMIC DNA]</scope>
    <source>
        <strain>97-27</strain>
    </source>
</reference>
<accession>Q6HPN0</accession>
<protein>
    <recommendedName>
        <fullName evidence="1">Energy-coupling factor transporter ATP-binding protein EcfA1</fullName>
        <shortName evidence="1">ECF transporter A component EcfA1</shortName>
        <ecNumber evidence="1">7.-.-.-</ecNumber>
    </recommendedName>
</protein>